<gene>
    <name evidence="1" type="primary">rps16</name>
</gene>
<evidence type="ECO:0000255" key="1">
    <source>
        <dbReference type="HAMAP-Rule" id="MF_00385"/>
    </source>
</evidence>
<evidence type="ECO:0000305" key="2"/>
<proteinExistence type="inferred from homology"/>
<accession>Q09MJ6</accession>
<keyword id="KW-0150">Chloroplast</keyword>
<keyword id="KW-0934">Plastid</keyword>
<keyword id="KW-0687">Ribonucleoprotein</keyword>
<keyword id="KW-0689">Ribosomal protein</keyword>
<geneLocation type="chloroplast"/>
<dbReference type="EMBL" id="DQ864733">
    <property type="protein sequence ID" value="ABI49002.1"/>
    <property type="molecule type" value="Genomic_DNA"/>
</dbReference>
<dbReference type="RefSeq" id="YP_740457.1">
    <property type="nucleotide sequence ID" value="NC_008334.1"/>
</dbReference>
<dbReference type="SMR" id="Q09MJ6"/>
<dbReference type="GeneID" id="4271244"/>
<dbReference type="KEGG" id="cit:4271244"/>
<dbReference type="OrthoDB" id="710097at71240"/>
<dbReference type="GO" id="GO:0009507">
    <property type="term" value="C:chloroplast"/>
    <property type="evidence" value="ECO:0007669"/>
    <property type="project" value="UniProtKB-SubCell"/>
</dbReference>
<dbReference type="GO" id="GO:1990904">
    <property type="term" value="C:ribonucleoprotein complex"/>
    <property type="evidence" value="ECO:0007669"/>
    <property type="project" value="UniProtKB-KW"/>
</dbReference>
<dbReference type="GO" id="GO:0005840">
    <property type="term" value="C:ribosome"/>
    <property type="evidence" value="ECO:0007669"/>
    <property type="project" value="UniProtKB-KW"/>
</dbReference>
<dbReference type="GO" id="GO:0003735">
    <property type="term" value="F:structural constituent of ribosome"/>
    <property type="evidence" value="ECO:0007669"/>
    <property type="project" value="InterPro"/>
</dbReference>
<dbReference type="GO" id="GO:0006412">
    <property type="term" value="P:translation"/>
    <property type="evidence" value="ECO:0007669"/>
    <property type="project" value="UniProtKB-UniRule"/>
</dbReference>
<dbReference type="FunFam" id="3.30.1320.10:FF:000003">
    <property type="entry name" value="30S ribosomal protein S16, chloroplastic"/>
    <property type="match status" value="1"/>
</dbReference>
<dbReference type="Gene3D" id="3.30.1320.10">
    <property type="match status" value="1"/>
</dbReference>
<dbReference type="HAMAP" id="MF_00385">
    <property type="entry name" value="Ribosomal_bS16"/>
    <property type="match status" value="1"/>
</dbReference>
<dbReference type="InterPro" id="IPR000307">
    <property type="entry name" value="Ribosomal_bS16"/>
</dbReference>
<dbReference type="InterPro" id="IPR020592">
    <property type="entry name" value="Ribosomal_bS16_CS"/>
</dbReference>
<dbReference type="InterPro" id="IPR023803">
    <property type="entry name" value="Ribosomal_bS16_dom_sf"/>
</dbReference>
<dbReference type="NCBIfam" id="TIGR00002">
    <property type="entry name" value="S16"/>
    <property type="match status" value="1"/>
</dbReference>
<dbReference type="PANTHER" id="PTHR12919">
    <property type="entry name" value="30S RIBOSOMAL PROTEIN S16"/>
    <property type="match status" value="1"/>
</dbReference>
<dbReference type="PANTHER" id="PTHR12919:SF20">
    <property type="entry name" value="SMALL RIBOSOMAL SUBUNIT PROTEIN BS16M"/>
    <property type="match status" value="1"/>
</dbReference>
<dbReference type="Pfam" id="PF00886">
    <property type="entry name" value="Ribosomal_S16"/>
    <property type="match status" value="1"/>
</dbReference>
<dbReference type="SUPFAM" id="SSF54565">
    <property type="entry name" value="Ribosomal protein S16"/>
    <property type="match status" value="1"/>
</dbReference>
<dbReference type="PROSITE" id="PS00732">
    <property type="entry name" value="RIBOSOMAL_S16"/>
    <property type="match status" value="1"/>
</dbReference>
<organism>
    <name type="scientific">Citrus sinensis</name>
    <name type="common">Sweet orange</name>
    <name type="synonym">Citrus aurantium var. sinensis</name>
    <dbReference type="NCBI Taxonomy" id="2711"/>
    <lineage>
        <taxon>Eukaryota</taxon>
        <taxon>Viridiplantae</taxon>
        <taxon>Streptophyta</taxon>
        <taxon>Embryophyta</taxon>
        <taxon>Tracheophyta</taxon>
        <taxon>Spermatophyta</taxon>
        <taxon>Magnoliopsida</taxon>
        <taxon>eudicotyledons</taxon>
        <taxon>Gunneridae</taxon>
        <taxon>Pentapetalae</taxon>
        <taxon>rosids</taxon>
        <taxon>malvids</taxon>
        <taxon>Sapindales</taxon>
        <taxon>Rutaceae</taxon>
        <taxon>Aurantioideae</taxon>
        <taxon>Citrus</taxon>
    </lineage>
</organism>
<feature type="chain" id="PRO_0000276940" description="Small ribosomal subunit protein bS16c">
    <location>
        <begin position="1"/>
        <end position="88"/>
    </location>
</feature>
<reference key="1">
    <citation type="journal article" date="2006" name="BMC Plant Biol.">
        <title>The complete chloroplast genome sequence of Citrus sinensis (L.) Osbeck var 'Ridge Pineapple': organization and phylogenetic relationships to other angiosperms.</title>
        <authorList>
            <person name="Bausher M.G."/>
            <person name="Singh N.D."/>
            <person name="Lee S.-B."/>
            <person name="Jansen R.K."/>
            <person name="Daniell H."/>
        </authorList>
    </citation>
    <scope>NUCLEOTIDE SEQUENCE [LARGE SCALE GENOMIC DNA]</scope>
    <source>
        <strain>cv. Osbeck var. Ridge Pineapple</strain>
    </source>
</reference>
<comment type="subcellular location">
    <subcellularLocation>
        <location>Plastid</location>
        <location>Chloroplast</location>
    </subcellularLocation>
</comment>
<comment type="similarity">
    <text evidence="1">Belongs to the bacterial ribosomal protein bS16 family.</text>
</comment>
<sequence>MVKLRLKRCGRKQRAVYRIVAIDGRSRREGRDLRKVGFYDPINNQTHLNVPAILYFLAKGAQPTGTVHDISQKAGVFTEVSLNQTKFY</sequence>
<protein>
    <recommendedName>
        <fullName evidence="1">Small ribosomal subunit protein bS16c</fullName>
    </recommendedName>
    <alternativeName>
        <fullName evidence="2">30S ribosomal protein S16, chloroplastic</fullName>
    </alternativeName>
</protein>
<name>RR16_CITSI</name>